<proteinExistence type="inferred from homology"/>
<sequence length="339" mass="38585">MRQKLEEIKNSAINELKTTLSKDQLEAIRVKYLGKKGELTQILRGMGALSQEERPIVGKVANEVRSYIEETIKEAFSDIKNKEKSIRLENETIDITMPGKKQAVGKRHPLDLTLESMKDIFISMGFTIEEGPEVELDKYNFEALNIPKNHPARGEQDTFYINDNLVLRTQTSPIQIRTMENQKPPIKMIAPGKVYRSDSVDATHSPIFYQMEGLVVDKGITFSDLKGTLELFAKRMFGDKVKTKFRPHHFPFTEPSAEMDATCFVCNGEGCKVCKGSGWIELLGCGMVHPQVLRNCNIDPEVYSGFAFGFGVDRMVMMKYGIDDIRLLYESDMRFLNQF</sequence>
<reference key="1">
    <citation type="journal article" date="2007" name="Genome Res.">
        <title>Genome sequence of a proteolytic (Group I) Clostridium botulinum strain Hall A and comparative analysis of the clostridial genomes.</title>
        <authorList>
            <person name="Sebaihia M."/>
            <person name="Peck M.W."/>
            <person name="Minton N.P."/>
            <person name="Thomson N.R."/>
            <person name="Holden M.T.G."/>
            <person name="Mitchell W.J."/>
            <person name="Carter A.T."/>
            <person name="Bentley S.D."/>
            <person name="Mason D.R."/>
            <person name="Crossman L."/>
            <person name="Paul C.J."/>
            <person name="Ivens A."/>
            <person name="Wells-Bennik M.H.J."/>
            <person name="Davis I.J."/>
            <person name="Cerdeno-Tarraga A.M."/>
            <person name="Churcher C."/>
            <person name="Quail M.A."/>
            <person name="Chillingworth T."/>
            <person name="Feltwell T."/>
            <person name="Fraser A."/>
            <person name="Goodhead I."/>
            <person name="Hance Z."/>
            <person name="Jagels K."/>
            <person name="Larke N."/>
            <person name="Maddison M."/>
            <person name="Moule S."/>
            <person name="Mungall K."/>
            <person name="Norbertczak H."/>
            <person name="Rabbinowitsch E."/>
            <person name="Sanders M."/>
            <person name="Simmonds M."/>
            <person name="White B."/>
            <person name="Whithead S."/>
            <person name="Parkhill J."/>
        </authorList>
    </citation>
    <scope>NUCLEOTIDE SEQUENCE [LARGE SCALE GENOMIC DNA]</scope>
    <source>
        <strain>Hall / ATCC 3502 / NCTC 13319 / Type A</strain>
    </source>
</reference>
<reference key="2">
    <citation type="journal article" date="2007" name="PLoS ONE">
        <title>Analysis of the neurotoxin complex genes in Clostridium botulinum A1-A4 and B1 strains: BoNT/A3, /Ba4 and /B1 clusters are located within plasmids.</title>
        <authorList>
            <person name="Smith T.J."/>
            <person name="Hill K.K."/>
            <person name="Foley B.T."/>
            <person name="Detter J.C."/>
            <person name="Munk A.C."/>
            <person name="Bruce D.C."/>
            <person name="Doggett N.A."/>
            <person name="Smith L.A."/>
            <person name="Marks J.D."/>
            <person name="Xie G."/>
            <person name="Brettin T.S."/>
        </authorList>
    </citation>
    <scope>NUCLEOTIDE SEQUENCE [LARGE SCALE GENOMIC DNA]</scope>
    <source>
        <strain>Hall / ATCC 3502 / NCTC 13319 / Type A</strain>
    </source>
</reference>
<accession>A5I6L1</accession>
<accession>A7G7U5</accession>
<name>SYFA_CLOBH</name>
<organism>
    <name type="scientific">Clostridium botulinum (strain Hall / ATCC 3502 / NCTC 13319 / Type A)</name>
    <dbReference type="NCBI Taxonomy" id="441771"/>
    <lineage>
        <taxon>Bacteria</taxon>
        <taxon>Bacillati</taxon>
        <taxon>Bacillota</taxon>
        <taxon>Clostridia</taxon>
        <taxon>Eubacteriales</taxon>
        <taxon>Clostridiaceae</taxon>
        <taxon>Clostridium</taxon>
    </lineage>
</organism>
<evidence type="ECO:0000255" key="1">
    <source>
        <dbReference type="HAMAP-Rule" id="MF_00281"/>
    </source>
</evidence>
<dbReference type="EC" id="6.1.1.20" evidence="1"/>
<dbReference type="EMBL" id="CP000727">
    <property type="protein sequence ID" value="ABS37854.1"/>
    <property type="molecule type" value="Genomic_DNA"/>
</dbReference>
<dbReference type="EMBL" id="AM412317">
    <property type="protein sequence ID" value="CAL84693.1"/>
    <property type="molecule type" value="Genomic_DNA"/>
</dbReference>
<dbReference type="RefSeq" id="WP_003403382.1">
    <property type="nucleotide sequence ID" value="NC_009698.1"/>
</dbReference>
<dbReference type="RefSeq" id="YP_001255621.1">
    <property type="nucleotide sequence ID" value="NC_009495.1"/>
</dbReference>
<dbReference type="RefSeq" id="YP_001388860.1">
    <property type="nucleotide sequence ID" value="NC_009698.1"/>
</dbReference>
<dbReference type="SMR" id="A5I6L1"/>
<dbReference type="GeneID" id="5185223"/>
<dbReference type="KEGG" id="cbh:CLC_3034"/>
<dbReference type="KEGG" id="cbo:CBO3131"/>
<dbReference type="PATRIC" id="fig|413999.7.peg.3110"/>
<dbReference type="HOGENOM" id="CLU_025086_0_1_9"/>
<dbReference type="PRO" id="PR:A5I6L1"/>
<dbReference type="Proteomes" id="UP000001986">
    <property type="component" value="Chromosome"/>
</dbReference>
<dbReference type="GO" id="GO:0005737">
    <property type="term" value="C:cytoplasm"/>
    <property type="evidence" value="ECO:0007669"/>
    <property type="project" value="UniProtKB-SubCell"/>
</dbReference>
<dbReference type="GO" id="GO:0005524">
    <property type="term" value="F:ATP binding"/>
    <property type="evidence" value="ECO:0007669"/>
    <property type="project" value="UniProtKB-UniRule"/>
</dbReference>
<dbReference type="GO" id="GO:0140096">
    <property type="term" value="F:catalytic activity, acting on a protein"/>
    <property type="evidence" value="ECO:0007669"/>
    <property type="project" value="UniProtKB-ARBA"/>
</dbReference>
<dbReference type="GO" id="GO:0000287">
    <property type="term" value="F:magnesium ion binding"/>
    <property type="evidence" value="ECO:0007669"/>
    <property type="project" value="UniProtKB-UniRule"/>
</dbReference>
<dbReference type="GO" id="GO:0004826">
    <property type="term" value="F:phenylalanine-tRNA ligase activity"/>
    <property type="evidence" value="ECO:0007669"/>
    <property type="project" value="UniProtKB-UniRule"/>
</dbReference>
<dbReference type="GO" id="GO:0016740">
    <property type="term" value="F:transferase activity"/>
    <property type="evidence" value="ECO:0007669"/>
    <property type="project" value="UniProtKB-ARBA"/>
</dbReference>
<dbReference type="GO" id="GO:0000049">
    <property type="term" value="F:tRNA binding"/>
    <property type="evidence" value="ECO:0007669"/>
    <property type="project" value="InterPro"/>
</dbReference>
<dbReference type="GO" id="GO:0006432">
    <property type="term" value="P:phenylalanyl-tRNA aminoacylation"/>
    <property type="evidence" value="ECO:0007669"/>
    <property type="project" value="UniProtKB-UniRule"/>
</dbReference>
<dbReference type="CDD" id="cd00496">
    <property type="entry name" value="PheRS_alpha_core"/>
    <property type="match status" value="1"/>
</dbReference>
<dbReference type="FunFam" id="3.30.930.10:FF:000003">
    <property type="entry name" value="Phenylalanine--tRNA ligase alpha subunit"/>
    <property type="match status" value="1"/>
</dbReference>
<dbReference type="Gene3D" id="3.30.930.10">
    <property type="entry name" value="Bira Bifunctional Protein, Domain 2"/>
    <property type="match status" value="1"/>
</dbReference>
<dbReference type="HAMAP" id="MF_00281">
    <property type="entry name" value="Phe_tRNA_synth_alpha1"/>
    <property type="match status" value="1"/>
</dbReference>
<dbReference type="InterPro" id="IPR006195">
    <property type="entry name" value="aa-tRNA-synth_II"/>
</dbReference>
<dbReference type="InterPro" id="IPR045864">
    <property type="entry name" value="aa-tRNA-synth_II/BPL/LPL"/>
</dbReference>
<dbReference type="InterPro" id="IPR004529">
    <property type="entry name" value="Phe-tRNA-synth_IIc_asu"/>
</dbReference>
<dbReference type="InterPro" id="IPR004188">
    <property type="entry name" value="Phe-tRNA_ligase_II_N"/>
</dbReference>
<dbReference type="InterPro" id="IPR022911">
    <property type="entry name" value="Phe_tRNA_ligase_alpha1_bac"/>
</dbReference>
<dbReference type="InterPro" id="IPR002319">
    <property type="entry name" value="Phenylalanyl-tRNA_Synthase"/>
</dbReference>
<dbReference type="InterPro" id="IPR010978">
    <property type="entry name" value="tRNA-bd_arm"/>
</dbReference>
<dbReference type="NCBIfam" id="TIGR00468">
    <property type="entry name" value="pheS"/>
    <property type="match status" value="1"/>
</dbReference>
<dbReference type="PANTHER" id="PTHR11538:SF41">
    <property type="entry name" value="PHENYLALANINE--TRNA LIGASE, MITOCHONDRIAL"/>
    <property type="match status" value="1"/>
</dbReference>
<dbReference type="PANTHER" id="PTHR11538">
    <property type="entry name" value="PHENYLALANYL-TRNA SYNTHETASE"/>
    <property type="match status" value="1"/>
</dbReference>
<dbReference type="Pfam" id="PF02912">
    <property type="entry name" value="Phe_tRNA-synt_N"/>
    <property type="match status" value="1"/>
</dbReference>
<dbReference type="Pfam" id="PF01409">
    <property type="entry name" value="tRNA-synt_2d"/>
    <property type="match status" value="1"/>
</dbReference>
<dbReference type="SUPFAM" id="SSF55681">
    <property type="entry name" value="Class II aaRS and biotin synthetases"/>
    <property type="match status" value="1"/>
</dbReference>
<dbReference type="SUPFAM" id="SSF46589">
    <property type="entry name" value="tRNA-binding arm"/>
    <property type="match status" value="1"/>
</dbReference>
<dbReference type="PROSITE" id="PS50862">
    <property type="entry name" value="AA_TRNA_LIGASE_II"/>
    <property type="match status" value="1"/>
</dbReference>
<protein>
    <recommendedName>
        <fullName evidence="1">Phenylalanine--tRNA ligase alpha subunit</fullName>
        <ecNumber evidence="1">6.1.1.20</ecNumber>
    </recommendedName>
    <alternativeName>
        <fullName evidence="1">Phenylalanyl-tRNA synthetase alpha subunit</fullName>
        <shortName evidence="1">PheRS</shortName>
    </alternativeName>
</protein>
<comment type="catalytic activity">
    <reaction evidence="1">
        <text>tRNA(Phe) + L-phenylalanine + ATP = L-phenylalanyl-tRNA(Phe) + AMP + diphosphate + H(+)</text>
        <dbReference type="Rhea" id="RHEA:19413"/>
        <dbReference type="Rhea" id="RHEA-COMP:9668"/>
        <dbReference type="Rhea" id="RHEA-COMP:9699"/>
        <dbReference type="ChEBI" id="CHEBI:15378"/>
        <dbReference type="ChEBI" id="CHEBI:30616"/>
        <dbReference type="ChEBI" id="CHEBI:33019"/>
        <dbReference type="ChEBI" id="CHEBI:58095"/>
        <dbReference type="ChEBI" id="CHEBI:78442"/>
        <dbReference type="ChEBI" id="CHEBI:78531"/>
        <dbReference type="ChEBI" id="CHEBI:456215"/>
        <dbReference type="EC" id="6.1.1.20"/>
    </reaction>
</comment>
<comment type="cofactor">
    <cofactor evidence="1">
        <name>Mg(2+)</name>
        <dbReference type="ChEBI" id="CHEBI:18420"/>
    </cofactor>
    <text evidence="1">Binds 2 magnesium ions per tetramer.</text>
</comment>
<comment type="subunit">
    <text evidence="1">Tetramer of two alpha and two beta subunits.</text>
</comment>
<comment type="subcellular location">
    <subcellularLocation>
        <location evidence="1">Cytoplasm</location>
    </subcellularLocation>
</comment>
<comment type="similarity">
    <text evidence="1">Belongs to the class-II aminoacyl-tRNA synthetase family. Phe-tRNA synthetase alpha subunit type 1 subfamily.</text>
</comment>
<keyword id="KW-0030">Aminoacyl-tRNA synthetase</keyword>
<keyword id="KW-0067">ATP-binding</keyword>
<keyword id="KW-0963">Cytoplasm</keyword>
<keyword id="KW-0436">Ligase</keyword>
<keyword id="KW-0460">Magnesium</keyword>
<keyword id="KW-0479">Metal-binding</keyword>
<keyword id="KW-0547">Nucleotide-binding</keyword>
<keyword id="KW-0648">Protein biosynthesis</keyword>
<keyword id="KW-1185">Reference proteome</keyword>
<gene>
    <name evidence="1" type="primary">pheS</name>
    <name type="ordered locus">CBO3131</name>
    <name type="ordered locus">CLC_3034</name>
</gene>
<feature type="chain" id="PRO_1000006815" description="Phenylalanine--tRNA ligase alpha subunit">
    <location>
        <begin position="1"/>
        <end position="339"/>
    </location>
</feature>
<feature type="binding site" evidence="1">
    <location>
        <position position="254"/>
    </location>
    <ligand>
        <name>Mg(2+)</name>
        <dbReference type="ChEBI" id="CHEBI:18420"/>
        <note>shared with beta subunit</note>
    </ligand>
</feature>